<sequence>MLRTTVSKLARPTVSRAFATTSRALAGETGAPPKTGGPGDAFQRREKANEDFAIRQREKEKLLELKKKLAEQQKHLKTLSDHIDEITREQGGERN</sequence>
<name>ATIF_NEUCR</name>
<comment type="function">
    <text evidence="1">Endogenous F(1)F(0)-ATPase inhibitor limiting ATP depletion when the mitochondrial membrane potential falls below a threshold and the F(1)F(0)-ATP synthase starts hydrolyzing ATP to pump protons out of the mitochondrial matrix. Required to avoid the consumption of cellular ATP when the F(1)F(0)-ATP synthase enzyme acts as an ATP hydrolase. Functions through inserting its N-terminal part into the catalytically active F1-ATPase, thereby blocking its rotational movement and subsequently the ATP hydrolase activity.</text>
</comment>
<comment type="subunit">
    <text evidence="4">Associates with the mitochondrial small ribosomal subunit (mt-SSU). IF(1) coiled-coil forms a helical bundle with the C-terminal extension of uS17m and also binds to mS27 in the mtSSU tail. Since the C-terminal extension of uS17m stabilizing the IF(1) on the mt-SSU is specific to N.crassa, IF(1) binding might also be specific.</text>
</comment>
<comment type="subcellular location">
    <subcellularLocation>
        <location evidence="4">Mitochondrion</location>
    </subcellularLocation>
</comment>
<comment type="domain">
    <text evidence="1">The inhibitory N-terminal region (residues 23-59) is entrapped between the C-terminal domains of the alpha(ADP-bound)-beta(ADP-bound) (atp1-atp2) subunits in one of the 3 catalytic interfaces of F(1)F(0)-ATPase.</text>
</comment>
<comment type="similarity">
    <text evidence="5">Belongs to the ATPase inhibitor family.</text>
</comment>
<feature type="transit peptide" description="Mitochondrion" evidence="2">
    <location>
        <begin position="1"/>
        <end position="25"/>
    </location>
</feature>
<feature type="chain" id="PRO_0000458586" description="F(1)-ATPase inhibitor IF(1), mitochondrial">
    <location>
        <begin position="26"/>
        <end position="95"/>
    </location>
</feature>
<feature type="region of interest" description="Disordered" evidence="3">
    <location>
        <begin position="20"/>
        <end position="48"/>
    </location>
</feature>
<feature type="region of interest" description="Disordered" evidence="3">
    <location>
        <begin position="76"/>
        <end position="95"/>
    </location>
</feature>
<accession>V5IRA3</accession>
<proteinExistence type="evidence at protein level"/>
<reference key="1">
    <citation type="journal article" date="2003" name="Nature">
        <title>The genome sequence of the filamentous fungus Neurospora crassa.</title>
        <authorList>
            <person name="Galagan J.E."/>
            <person name="Calvo S.E."/>
            <person name="Borkovich K.A."/>
            <person name="Selker E.U."/>
            <person name="Read N.D."/>
            <person name="Jaffe D.B."/>
            <person name="FitzHugh W."/>
            <person name="Ma L.-J."/>
            <person name="Smirnov S."/>
            <person name="Purcell S."/>
            <person name="Rehman B."/>
            <person name="Elkins T."/>
            <person name="Engels R."/>
            <person name="Wang S."/>
            <person name="Nielsen C.B."/>
            <person name="Butler J."/>
            <person name="Endrizzi M."/>
            <person name="Qui D."/>
            <person name="Ianakiev P."/>
            <person name="Bell-Pedersen D."/>
            <person name="Nelson M.A."/>
            <person name="Werner-Washburne M."/>
            <person name="Selitrennikoff C.P."/>
            <person name="Kinsey J.A."/>
            <person name="Braun E.L."/>
            <person name="Zelter A."/>
            <person name="Schulte U."/>
            <person name="Kothe G.O."/>
            <person name="Jedd G."/>
            <person name="Mewes H.-W."/>
            <person name="Staben C."/>
            <person name="Marcotte E."/>
            <person name="Greenberg D."/>
            <person name="Roy A."/>
            <person name="Foley K."/>
            <person name="Naylor J."/>
            <person name="Stange-Thomann N."/>
            <person name="Barrett R."/>
            <person name="Gnerre S."/>
            <person name="Kamal M."/>
            <person name="Kamvysselis M."/>
            <person name="Mauceli E.W."/>
            <person name="Bielke C."/>
            <person name="Rudd S."/>
            <person name="Frishman D."/>
            <person name="Krystofova S."/>
            <person name="Rasmussen C."/>
            <person name="Metzenberg R.L."/>
            <person name="Perkins D.D."/>
            <person name="Kroken S."/>
            <person name="Cogoni C."/>
            <person name="Macino G."/>
            <person name="Catcheside D.E.A."/>
            <person name="Li W."/>
            <person name="Pratt R.J."/>
            <person name="Osmani S.A."/>
            <person name="DeSouza C.P.C."/>
            <person name="Glass N.L."/>
            <person name="Orbach M.J."/>
            <person name="Berglund J.A."/>
            <person name="Voelker R."/>
            <person name="Yarden O."/>
            <person name="Plamann M."/>
            <person name="Seiler S."/>
            <person name="Dunlap J.C."/>
            <person name="Radford A."/>
            <person name="Aramayo R."/>
            <person name="Natvig D.O."/>
            <person name="Alex L.A."/>
            <person name="Mannhaupt G."/>
            <person name="Ebbole D.J."/>
            <person name="Freitag M."/>
            <person name="Paulsen I."/>
            <person name="Sachs M.S."/>
            <person name="Lander E.S."/>
            <person name="Nusbaum C."/>
            <person name="Birren B.W."/>
        </authorList>
    </citation>
    <scope>NUCLEOTIDE SEQUENCE [LARGE SCALE GENOMIC DNA]</scope>
    <source>
        <strain>ATCC 24698 / 74-OR23-1A / CBS 708.71 / DSM 1257 / FGSC 987</strain>
    </source>
</reference>
<reference evidence="6 7" key="2">
    <citation type="journal article" date="2020" name="Nat. Commun.">
        <title>Analysis of translating mitoribosome reveals functional characteristics of translation in mitochondria of fungi.</title>
        <authorList>
            <person name="Itoh Y."/>
            <person name="Naschberger A."/>
            <person name="Mortezaei N."/>
            <person name="Herrmann J.M."/>
            <person name="Amunts A."/>
        </authorList>
    </citation>
    <scope>STRUCTURE BY ELECTRON MICROSCOPY (2.85 ANGSTROMS)</scope>
</reference>
<evidence type="ECO:0000250" key="1">
    <source>
        <dbReference type="UniProtKB" id="P01097"/>
    </source>
</evidence>
<evidence type="ECO:0000255" key="2"/>
<evidence type="ECO:0000256" key="3">
    <source>
        <dbReference type="SAM" id="MobiDB-lite"/>
    </source>
</evidence>
<evidence type="ECO:0000269" key="4">
    <source>
    </source>
</evidence>
<evidence type="ECO:0000305" key="5"/>
<evidence type="ECO:0007744" key="6">
    <source>
        <dbReference type="PDB" id="6YW5"/>
    </source>
</evidence>
<evidence type="ECO:0007744" key="7">
    <source>
        <dbReference type="PDB" id="6YWX"/>
    </source>
</evidence>
<gene>
    <name type="primary">inh1</name>
    <name type="ORF">NCU02807</name>
</gene>
<protein>
    <recommendedName>
        <fullName>F(1)-ATPase inhibitor IF(1), mitochondrial</fullName>
    </recommendedName>
    <alternativeName>
        <fullName>ATPase inhibitory factor 1</fullName>
        <shortName>IF(1)</shortName>
        <shortName>IF1</shortName>
    </alternativeName>
</protein>
<organism>
    <name type="scientific">Neurospora crassa (strain ATCC 24698 / 74-OR23-1A / CBS 708.71 / DSM 1257 / FGSC 987)</name>
    <dbReference type="NCBI Taxonomy" id="367110"/>
    <lineage>
        <taxon>Eukaryota</taxon>
        <taxon>Fungi</taxon>
        <taxon>Dikarya</taxon>
        <taxon>Ascomycota</taxon>
        <taxon>Pezizomycotina</taxon>
        <taxon>Sordariomycetes</taxon>
        <taxon>Sordariomycetidae</taxon>
        <taxon>Sordariales</taxon>
        <taxon>Sordariaceae</taxon>
        <taxon>Neurospora</taxon>
    </lineage>
</organism>
<dbReference type="EMBL" id="CM002236">
    <property type="protein sequence ID" value="ESA44379.1"/>
    <property type="molecule type" value="Genomic_DNA"/>
</dbReference>
<dbReference type="EMBL" id="CM002236">
    <property type="protein sequence ID" value="ESA44380.1"/>
    <property type="molecule type" value="Genomic_DNA"/>
</dbReference>
<dbReference type="RefSeq" id="XP_011393036.1">
    <property type="nucleotide sequence ID" value="XM_011394734.1"/>
</dbReference>
<dbReference type="RefSeq" id="XP_011393037.1">
    <property type="nucleotide sequence ID" value="XM_011394735.1"/>
</dbReference>
<dbReference type="PDB" id="6YW5">
    <property type="method" value="EM"/>
    <property type="resolution" value="2.85 A"/>
    <property type="chains" value="00/99=1-95"/>
</dbReference>
<dbReference type="PDB" id="6YWX">
    <property type="method" value="EM"/>
    <property type="resolution" value="3.10 A"/>
    <property type="chains" value="00/99=1-95"/>
</dbReference>
<dbReference type="PDBsum" id="6YW5"/>
<dbReference type="PDBsum" id="6YWX"/>
<dbReference type="EMDB" id="EMD-10958"/>
<dbReference type="EMDB" id="EMD-10978"/>
<dbReference type="SMR" id="V5IRA3"/>
<dbReference type="STRING" id="367110.V5IRA3"/>
<dbReference type="PaxDb" id="5141-EFNCRP00000002420"/>
<dbReference type="EnsemblFungi" id="ESA44379">
    <property type="protein sequence ID" value="ESA44379"/>
    <property type="gene ID" value="NCU02807"/>
</dbReference>
<dbReference type="EnsemblFungi" id="ESA44380">
    <property type="protein sequence ID" value="ESA44380"/>
    <property type="gene ID" value="NCU02807"/>
</dbReference>
<dbReference type="GeneID" id="3880603"/>
<dbReference type="KEGG" id="ncr:NCU02807"/>
<dbReference type="VEuPathDB" id="FungiDB:NCU02807"/>
<dbReference type="HOGENOM" id="CLU_145563_0_1_1"/>
<dbReference type="OMA" id="NQGGEHN"/>
<dbReference type="OrthoDB" id="5532350at2759"/>
<dbReference type="Proteomes" id="UP000001805">
    <property type="component" value="Chromosome 1, Linkage Group I"/>
</dbReference>
<dbReference type="GO" id="GO:0005739">
    <property type="term" value="C:mitochondrion"/>
    <property type="evidence" value="ECO:0007669"/>
    <property type="project" value="UniProtKB-SubCell"/>
</dbReference>
<dbReference type="GO" id="GO:0042030">
    <property type="term" value="F:ATPase inhibitor activity"/>
    <property type="evidence" value="ECO:0007669"/>
    <property type="project" value="InterPro"/>
</dbReference>
<dbReference type="Gene3D" id="1.20.5.500">
    <property type="entry name" value="Single helix bin"/>
    <property type="match status" value="1"/>
</dbReference>
<dbReference type="InterPro" id="IPR007648">
    <property type="entry name" value="ATPase_inhibitor_mt"/>
</dbReference>
<dbReference type="Pfam" id="PF04568">
    <property type="entry name" value="IATP"/>
    <property type="match status" value="1"/>
</dbReference>
<dbReference type="SUPFAM" id="SSF64602">
    <property type="entry name" value="F1 ATPase inhibitor, IF1, C-terminal domain"/>
    <property type="match status" value="1"/>
</dbReference>
<keyword id="KW-0002">3D-structure</keyword>
<keyword id="KW-0496">Mitochondrion</keyword>
<keyword id="KW-1185">Reference proteome</keyword>
<keyword id="KW-0809">Transit peptide</keyword>